<comment type="function">
    <text evidence="1">Catalyzes the conversion of 3-deoxy-D-arabino-heptulosonate 7-phosphate (DAHP) to dehydroquinate (DHQ).</text>
</comment>
<comment type="catalytic activity">
    <reaction evidence="1">
        <text>7-phospho-2-dehydro-3-deoxy-D-arabino-heptonate = 3-dehydroquinate + phosphate</text>
        <dbReference type="Rhea" id="RHEA:21968"/>
        <dbReference type="ChEBI" id="CHEBI:32364"/>
        <dbReference type="ChEBI" id="CHEBI:43474"/>
        <dbReference type="ChEBI" id="CHEBI:58394"/>
        <dbReference type="EC" id="4.2.3.4"/>
    </reaction>
</comment>
<comment type="cofactor">
    <cofactor evidence="1">
        <name>Co(2+)</name>
        <dbReference type="ChEBI" id="CHEBI:48828"/>
    </cofactor>
    <cofactor evidence="1">
        <name>Zn(2+)</name>
        <dbReference type="ChEBI" id="CHEBI:29105"/>
    </cofactor>
    <text evidence="1">Binds 1 divalent metal cation per subunit. Can use either Co(2+) or Zn(2+).</text>
</comment>
<comment type="cofactor">
    <cofactor evidence="1">
        <name>NAD(+)</name>
        <dbReference type="ChEBI" id="CHEBI:57540"/>
    </cofactor>
</comment>
<comment type="pathway">
    <text evidence="1">Metabolic intermediate biosynthesis; chorismate biosynthesis; chorismate from D-erythrose 4-phosphate and phosphoenolpyruvate: step 2/7.</text>
</comment>
<comment type="subcellular location">
    <subcellularLocation>
        <location evidence="1">Cytoplasm</location>
    </subcellularLocation>
</comment>
<comment type="similarity">
    <text evidence="1">Belongs to the sugar phosphate cyclases superfamily. Dehydroquinate synthase family.</text>
</comment>
<name>AROB_CORDI</name>
<reference key="1">
    <citation type="journal article" date="2003" name="Nucleic Acids Res.">
        <title>The complete genome sequence and analysis of Corynebacterium diphtheriae NCTC13129.</title>
        <authorList>
            <person name="Cerdeno-Tarraga A.-M."/>
            <person name="Efstratiou A."/>
            <person name="Dover L.G."/>
            <person name="Holden M.T.G."/>
            <person name="Pallen M.J."/>
            <person name="Bentley S.D."/>
            <person name="Besra G.S."/>
            <person name="Churcher C.M."/>
            <person name="James K.D."/>
            <person name="De Zoysa A."/>
            <person name="Chillingworth T."/>
            <person name="Cronin A."/>
            <person name="Dowd L."/>
            <person name="Feltwell T."/>
            <person name="Hamlin N."/>
            <person name="Holroyd S."/>
            <person name="Jagels K."/>
            <person name="Moule S."/>
            <person name="Quail M.A."/>
            <person name="Rabbinowitsch E."/>
            <person name="Rutherford K.M."/>
            <person name="Thomson N.R."/>
            <person name="Unwin L."/>
            <person name="Whitehead S."/>
            <person name="Barrell B.G."/>
            <person name="Parkhill J."/>
        </authorList>
    </citation>
    <scope>NUCLEOTIDE SEQUENCE [LARGE SCALE GENOMIC DNA]</scope>
    <source>
        <strain>ATCC 700971 / NCTC 13129 / Biotype gravis</strain>
    </source>
</reference>
<sequence>MPTIEVKSSNPYQVRIDKQLNTEIVTTAQLSGAENVAIITQPPLLERAGTLEKMLAQAGLASHVLAVPDAETGKTLEVAGRCWDQLGEWGFSRSDLIIGFGGGAATDLAGFVAAAWMRGIKVIQVPTTLLAMVDAAVGGKTGINTAAGKNLVGAFHEPIAVFIDVDHLDSLPQDEIIAGSAEIIKTGFIADPRILELYEKDPAACLLKDGHLPELIARSIAVKSKVVSQDLKESGLREILNYGHTFGHAVELRENFSWRHGNAVAVGMVFVAELANIRGLISDELVERHRKILKSIGLPTSYSQGHFEELHQGMKHDKKNRNSMIRFVALRDISDVVRLEGPTDEELFQAYSRLALEMS</sequence>
<keyword id="KW-0028">Amino-acid biosynthesis</keyword>
<keyword id="KW-0057">Aromatic amino acid biosynthesis</keyword>
<keyword id="KW-0170">Cobalt</keyword>
<keyword id="KW-0963">Cytoplasm</keyword>
<keyword id="KW-0456">Lyase</keyword>
<keyword id="KW-0479">Metal-binding</keyword>
<keyword id="KW-0520">NAD</keyword>
<keyword id="KW-0547">Nucleotide-binding</keyword>
<keyword id="KW-1185">Reference proteome</keyword>
<keyword id="KW-0862">Zinc</keyword>
<protein>
    <recommendedName>
        <fullName evidence="1">3-dehydroquinate synthase</fullName>
        <shortName evidence="1">DHQS</shortName>
        <ecNumber evidence="1">4.2.3.4</ecNumber>
    </recommendedName>
</protein>
<feature type="chain" id="PRO_0000231081" description="3-dehydroquinate synthase">
    <location>
        <begin position="1"/>
        <end position="359"/>
    </location>
</feature>
<feature type="binding site" evidence="1">
    <location>
        <begin position="69"/>
        <end position="74"/>
    </location>
    <ligand>
        <name>NAD(+)</name>
        <dbReference type="ChEBI" id="CHEBI:57540"/>
    </ligand>
</feature>
<feature type="binding site" evidence="1">
    <location>
        <begin position="103"/>
        <end position="107"/>
    </location>
    <ligand>
        <name>NAD(+)</name>
        <dbReference type="ChEBI" id="CHEBI:57540"/>
    </ligand>
</feature>
<feature type="binding site" evidence="1">
    <location>
        <begin position="127"/>
        <end position="128"/>
    </location>
    <ligand>
        <name>NAD(+)</name>
        <dbReference type="ChEBI" id="CHEBI:57540"/>
    </ligand>
</feature>
<feature type="binding site" evidence="1">
    <location>
        <position position="140"/>
    </location>
    <ligand>
        <name>NAD(+)</name>
        <dbReference type="ChEBI" id="CHEBI:57540"/>
    </ligand>
</feature>
<feature type="binding site" evidence="1">
    <location>
        <position position="149"/>
    </location>
    <ligand>
        <name>NAD(+)</name>
        <dbReference type="ChEBI" id="CHEBI:57540"/>
    </ligand>
</feature>
<feature type="binding site" evidence="1">
    <location>
        <position position="182"/>
    </location>
    <ligand>
        <name>Zn(2+)</name>
        <dbReference type="ChEBI" id="CHEBI:29105"/>
    </ligand>
</feature>
<feature type="binding site" evidence="1">
    <location>
        <position position="244"/>
    </location>
    <ligand>
        <name>Zn(2+)</name>
        <dbReference type="ChEBI" id="CHEBI:29105"/>
    </ligand>
</feature>
<feature type="binding site" evidence="1">
    <location>
        <position position="260"/>
    </location>
    <ligand>
        <name>Zn(2+)</name>
        <dbReference type="ChEBI" id="CHEBI:29105"/>
    </ligand>
</feature>
<gene>
    <name evidence="1" type="primary">aroB</name>
    <name type="ordered locus">DIP1343</name>
</gene>
<proteinExistence type="inferred from homology"/>
<organism>
    <name type="scientific">Corynebacterium diphtheriae (strain ATCC 700971 / NCTC 13129 / Biotype gravis)</name>
    <dbReference type="NCBI Taxonomy" id="257309"/>
    <lineage>
        <taxon>Bacteria</taxon>
        <taxon>Bacillati</taxon>
        <taxon>Actinomycetota</taxon>
        <taxon>Actinomycetes</taxon>
        <taxon>Mycobacteriales</taxon>
        <taxon>Corynebacteriaceae</taxon>
        <taxon>Corynebacterium</taxon>
    </lineage>
</organism>
<accession>Q6NH04</accession>
<evidence type="ECO:0000255" key="1">
    <source>
        <dbReference type="HAMAP-Rule" id="MF_00110"/>
    </source>
</evidence>
<dbReference type="EC" id="4.2.3.4" evidence="1"/>
<dbReference type="EMBL" id="BX248357">
    <property type="protein sequence ID" value="CAE49871.1"/>
    <property type="molecule type" value="Genomic_DNA"/>
</dbReference>
<dbReference type="RefSeq" id="WP_010934991.1">
    <property type="nucleotide sequence ID" value="NC_002935.2"/>
</dbReference>
<dbReference type="SMR" id="Q6NH04"/>
<dbReference type="STRING" id="257309.DIP1343"/>
<dbReference type="KEGG" id="cdi:DIP1343"/>
<dbReference type="HOGENOM" id="CLU_001201_0_3_11"/>
<dbReference type="UniPathway" id="UPA00053">
    <property type="reaction ID" value="UER00085"/>
</dbReference>
<dbReference type="Proteomes" id="UP000002198">
    <property type="component" value="Chromosome"/>
</dbReference>
<dbReference type="GO" id="GO:0005737">
    <property type="term" value="C:cytoplasm"/>
    <property type="evidence" value="ECO:0007669"/>
    <property type="project" value="UniProtKB-SubCell"/>
</dbReference>
<dbReference type="GO" id="GO:0003856">
    <property type="term" value="F:3-dehydroquinate synthase activity"/>
    <property type="evidence" value="ECO:0007669"/>
    <property type="project" value="UniProtKB-UniRule"/>
</dbReference>
<dbReference type="GO" id="GO:0046872">
    <property type="term" value="F:metal ion binding"/>
    <property type="evidence" value="ECO:0007669"/>
    <property type="project" value="UniProtKB-KW"/>
</dbReference>
<dbReference type="GO" id="GO:0000166">
    <property type="term" value="F:nucleotide binding"/>
    <property type="evidence" value="ECO:0007669"/>
    <property type="project" value="UniProtKB-KW"/>
</dbReference>
<dbReference type="GO" id="GO:0008652">
    <property type="term" value="P:amino acid biosynthetic process"/>
    <property type="evidence" value="ECO:0007669"/>
    <property type="project" value="UniProtKB-KW"/>
</dbReference>
<dbReference type="GO" id="GO:0009073">
    <property type="term" value="P:aromatic amino acid family biosynthetic process"/>
    <property type="evidence" value="ECO:0007669"/>
    <property type="project" value="UniProtKB-KW"/>
</dbReference>
<dbReference type="GO" id="GO:0009423">
    <property type="term" value="P:chorismate biosynthetic process"/>
    <property type="evidence" value="ECO:0007669"/>
    <property type="project" value="UniProtKB-UniRule"/>
</dbReference>
<dbReference type="CDD" id="cd08195">
    <property type="entry name" value="DHQS"/>
    <property type="match status" value="1"/>
</dbReference>
<dbReference type="FunFam" id="3.40.50.1970:FF:000007">
    <property type="entry name" value="Pentafunctional AROM polypeptide"/>
    <property type="match status" value="1"/>
</dbReference>
<dbReference type="Gene3D" id="3.40.50.1970">
    <property type="match status" value="1"/>
</dbReference>
<dbReference type="Gene3D" id="1.20.1090.10">
    <property type="entry name" value="Dehydroquinate synthase-like - alpha domain"/>
    <property type="match status" value="1"/>
</dbReference>
<dbReference type="HAMAP" id="MF_00110">
    <property type="entry name" value="DHQ_synthase"/>
    <property type="match status" value="1"/>
</dbReference>
<dbReference type="InterPro" id="IPR050071">
    <property type="entry name" value="Dehydroquinate_synthase"/>
</dbReference>
<dbReference type="InterPro" id="IPR016037">
    <property type="entry name" value="DHQ_synth_AroB"/>
</dbReference>
<dbReference type="InterPro" id="IPR030963">
    <property type="entry name" value="DHQ_synth_fam"/>
</dbReference>
<dbReference type="InterPro" id="IPR030960">
    <property type="entry name" value="DHQS/DOIS_N"/>
</dbReference>
<dbReference type="InterPro" id="IPR056179">
    <property type="entry name" value="DHQS_C"/>
</dbReference>
<dbReference type="NCBIfam" id="TIGR01357">
    <property type="entry name" value="aroB"/>
    <property type="match status" value="1"/>
</dbReference>
<dbReference type="PANTHER" id="PTHR43622">
    <property type="entry name" value="3-DEHYDROQUINATE SYNTHASE"/>
    <property type="match status" value="1"/>
</dbReference>
<dbReference type="PANTHER" id="PTHR43622:SF7">
    <property type="entry name" value="3-DEHYDROQUINATE SYNTHASE, CHLOROPLASTIC"/>
    <property type="match status" value="1"/>
</dbReference>
<dbReference type="Pfam" id="PF01761">
    <property type="entry name" value="DHQ_synthase"/>
    <property type="match status" value="1"/>
</dbReference>
<dbReference type="Pfam" id="PF24621">
    <property type="entry name" value="DHQS_C"/>
    <property type="match status" value="1"/>
</dbReference>
<dbReference type="PIRSF" id="PIRSF001455">
    <property type="entry name" value="DHQ_synth"/>
    <property type="match status" value="1"/>
</dbReference>
<dbReference type="SUPFAM" id="SSF56796">
    <property type="entry name" value="Dehydroquinate synthase-like"/>
    <property type="match status" value="1"/>
</dbReference>